<evidence type="ECO:0000250" key="1"/>
<evidence type="ECO:0000255" key="2"/>
<evidence type="ECO:0000269" key="3">
    <source>
    </source>
</evidence>
<evidence type="ECO:0000305" key="4"/>
<accession>D2Y298</accession>
<proteinExistence type="evidence at protein level"/>
<reference key="1">
    <citation type="journal article" date="2010" name="J. Proteome Res.">
        <title>Molecular diversification of peptide toxins from the tarantula Haplopelma hainanum (Ornithoctonus hainana) venom based on transcriptomic, peptidomic, and genomic analyses.</title>
        <authorList>
            <person name="Tang X."/>
            <person name="Zhang Y."/>
            <person name="Hu W."/>
            <person name="Xu D."/>
            <person name="Tao H."/>
            <person name="Yang X."/>
            <person name="Li Y."/>
            <person name="Jiang L."/>
            <person name="Liang S."/>
        </authorList>
    </citation>
    <scope>NUCLEOTIDE SEQUENCE [LARGE SCALE MRNA]</scope>
    <scope>PROTEIN SEQUENCE OF 75-113</scope>
    <scope>IDENTIFICATION BY MASS SPECTROMETRY</scope>
    <source>
        <tissue>Venom</tissue>
        <tissue>Venom gland</tissue>
    </source>
</reference>
<name>H1625_CYRHA</name>
<dbReference type="EMBL" id="GU292975">
    <property type="protein sequence ID" value="ADB56791.1"/>
    <property type="molecule type" value="mRNA"/>
</dbReference>
<dbReference type="ArachnoServer" id="AS001592">
    <property type="toxin name" value="U11-theraphotoxin-Hhn1a"/>
</dbReference>
<dbReference type="GO" id="GO:0005576">
    <property type="term" value="C:extracellular region"/>
    <property type="evidence" value="ECO:0007669"/>
    <property type="project" value="UniProtKB-SubCell"/>
</dbReference>
<dbReference type="GO" id="GO:0019871">
    <property type="term" value="F:sodium channel inhibitor activity"/>
    <property type="evidence" value="ECO:0007669"/>
    <property type="project" value="InterPro"/>
</dbReference>
<dbReference type="GO" id="GO:0090729">
    <property type="term" value="F:toxin activity"/>
    <property type="evidence" value="ECO:0007669"/>
    <property type="project" value="UniProtKB-KW"/>
</dbReference>
<dbReference type="InterPro" id="IPR012627">
    <property type="entry name" value="Toxin_22"/>
</dbReference>
<dbReference type="Pfam" id="PF08092">
    <property type="entry name" value="Toxin_22"/>
    <property type="match status" value="1"/>
</dbReference>
<organism>
    <name type="scientific">Cyriopagopus hainanus</name>
    <name type="common">Chinese bird spider</name>
    <name type="synonym">Haplopelma hainanum</name>
    <dbReference type="NCBI Taxonomy" id="209901"/>
    <lineage>
        <taxon>Eukaryota</taxon>
        <taxon>Metazoa</taxon>
        <taxon>Ecdysozoa</taxon>
        <taxon>Arthropoda</taxon>
        <taxon>Chelicerata</taxon>
        <taxon>Arachnida</taxon>
        <taxon>Araneae</taxon>
        <taxon>Mygalomorphae</taxon>
        <taxon>Theraphosidae</taxon>
        <taxon>Haplopelma</taxon>
    </lineage>
</organism>
<protein>
    <recommendedName>
        <fullName>U11-theraphotoxin-Hhn1a</fullName>
        <shortName>U11-TRTX-Hhn1a</shortName>
    </recommendedName>
    <alternativeName>
        <fullName>Hainantoxin-XVI.25</fullName>
        <shortName>HNTX-XVI.25</shortName>
    </alternativeName>
    <alternativeName>
        <fullName>Peptide F4-19.87</fullName>
    </alternativeName>
</protein>
<feature type="signal peptide" evidence="2">
    <location>
        <begin position="1"/>
        <end position="21"/>
    </location>
</feature>
<feature type="propeptide" id="PRO_0000400905" evidence="3">
    <location>
        <begin position="22"/>
        <end position="74"/>
    </location>
</feature>
<feature type="peptide" id="PRO_0000400906" description="U11-theraphotoxin-Hhn1a">
    <location>
        <begin position="75"/>
        <end position="113"/>
    </location>
</feature>
<feature type="disulfide bond" evidence="1">
    <location>
        <begin position="75"/>
        <end position="90"/>
    </location>
</feature>
<feature type="disulfide bond" evidence="1">
    <location>
        <begin position="82"/>
        <end position="95"/>
    </location>
</feature>
<feature type="disulfide bond" evidence="1">
    <location>
        <begin position="89"/>
        <end position="110"/>
    </location>
</feature>
<comment type="function">
    <text evidence="1">Probable ion channel inhibitor.</text>
</comment>
<comment type="subcellular location">
    <subcellularLocation>
        <location>Secreted</location>
    </subcellularLocation>
</comment>
<comment type="tissue specificity">
    <text>Expressed by the venom gland.</text>
</comment>
<comment type="domain">
    <text evidence="1">The presence of a 'disulfide through disulfide knot' structurally defines this protein as a knottin.</text>
</comment>
<comment type="similarity">
    <text evidence="4">Belongs to the neurotoxin 14 (magi-1) family. 01 (HNTX-16) subfamily.</text>
</comment>
<keyword id="KW-0903">Direct protein sequencing</keyword>
<keyword id="KW-1015">Disulfide bond</keyword>
<keyword id="KW-0872">Ion channel impairing toxin</keyword>
<keyword id="KW-0960">Knottin</keyword>
<keyword id="KW-0964">Secreted</keyword>
<keyword id="KW-0732">Signal</keyword>
<keyword id="KW-0800">Toxin</keyword>
<sequence length="113" mass="13090">MNTVRVTFLLVFVLAVSLGQADKDENRMEMQEKTEQGESYLDFAENLLLQKLEELEAKLLEEDSEESRNSRQKRCIGEGVPCDENDPRCCSGLVCLKPTLHGIWYKSYYCYKK</sequence>